<accession>P67777</accession>
<accession>P05323</accession>
<accession>P13197</accession>
<keyword id="KW-0137">Centromere</keyword>
<keyword id="KW-0158">Chromosome</keyword>
<keyword id="KW-0963">Cytoplasm</keyword>
<keyword id="KW-0206">Cytoskeleton</keyword>
<keyword id="KW-0378">Hydrolase</keyword>
<keyword id="KW-0408">Iron</keyword>
<keyword id="KW-0464">Manganese</keyword>
<keyword id="KW-0469">Meiosis</keyword>
<keyword id="KW-0479">Metal-binding</keyword>
<keyword id="KW-0488">Methylation</keyword>
<keyword id="KW-0539">Nucleus</keyword>
<keyword id="KW-0597">Phosphoprotein</keyword>
<keyword id="KW-0904">Protein phosphatase</keyword>
<keyword id="KW-1185">Reference proteome</keyword>
<keyword id="KW-0832">Ubl conjugation</keyword>
<keyword id="KW-0862">Zinc</keyword>
<proteinExistence type="evidence at transcript level"/>
<gene>
    <name type="primary">PPP2CA</name>
</gene>
<organism>
    <name type="scientific">Oryctolagus cuniculus</name>
    <name type="common">Rabbit</name>
    <dbReference type="NCBI Taxonomy" id="9986"/>
    <lineage>
        <taxon>Eukaryota</taxon>
        <taxon>Metazoa</taxon>
        <taxon>Chordata</taxon>
        <taxon>Craniata</taxon>
        <taxon>Vertebrata</taxon>
        <taxon>Euteleostomi</taxon>
        <taxon>Mammalia</taxon>
        <taxon>Eutheria</taxon>
        <taxon>Euarchontoglires</taxon>
        <taxon>Glires</taxon>
        <taxon>Lagomorpha</taxon>
        <taxon>Leporidae</taxon>
        <taxon>Oryctolagus</taxon>
    </lineage>
</organism>
<evidence type="ECO:0000250" key="1">
    <source>
        <dbReference type="UniProtKB" id="P36873"/>
    </source>
</evidence>
<evidence type="ECO:0000250" key="2">
    <source>
        <dbReference type="UniProtKB" id="P63330"/>
    </source>
</evidence>
<evidence type="ECO:0000250" key="3">
    <source>
        <dbReference type="UniProtKB" id="P67774"/>
    </source>
</evidence>
<evidence type="ECO:0000250" key="4">
    <source>
        <dbReference type="UniProtKB" id="P67775"/>
    </source>
</evidence>
<evidence type="ECO:0000305" key="5"/>
<name>PP2AA_RABIT</name>
<reference key="1">
    <citation type="journal article" date="1987" name="FEBS Lett.">
        <title>Isolation and sequence analysis of a cDNA clone encoding the entire catalytic subunit of a type-2A protein phosphatase.</title>
        <authorList>
            <person name="da Cruz e Silva O.B."/>
            <person name="Alemany S."/>
            <person name="Campbell D.G."/>
            <person name="Cohen P.T.W."/>
        </authorList>
    </citation>
    <scope>NUCLEOTIDE SEQUENCE [MRNA]</scope>
    <source>
        <tissue>Skeletal muscle</tissue>
    </source>
</reference>
<dbReference type="EC" id="3.1.3.16" evidence="4"/>
<dbReference type="EMBL" id="X06087">
    <property type="protein sequence ID" value="CAA29471.1"/>
    <property type="molecule type" value="mRNA"/>
</dbReference>
<dbReference type="PIR" id="S00104">
    <property type="entry name" value="PARBA1"/>
</dbReference>
<dbReference type="PIR" id="S01986">
    <property type="entry name" value="PAHU2A"/>
</dbReference>
<dbReference type="RefSeq" id="NP_001095156.1">
    <property type="nucleotide sequence ID" value="NM_001101686.1"/>
</dbReference>
<dbReference type="SMR" id="P67777"/>
<dbReference type="BioGRID" id="1172273">
    <property type="interactions" value="1"/>
</dbReference>
<dbReference type="FunCoup" id="P67777">
    <property type="interactions" value="1672"/>
</dbReference>
<dbReference type="STRING" id="9986.ENSOCUP00000013713"/>
<dbReference type="ChEMBL" id="CHEMBL5591"/>
<dbReference type="PaxDb" id="9986-ENSOCUP00000013713"/>
<dbReference type="Ensembl" id="ENSOCUT00000015956.4">
    <property type="protein sequence ID" value="ENSOCUP00000013713.2"/>
    <property type="gene ID" value="ENSOCUG00000015961.4"/>
</dbReference>
<dbReference type="GeneID" id="100009252"/>
<dbReference type="KEGG" id="ocu:100009252"/>
<dbReference type="CTD" id="5515"/>
<dbReference type="eggNOG" id="KOG0371">
    <property type="taxonomic scope" value="Eukaryota"/>
</dbReference>
<dbReference type="GeneTree" id="ENSGT00550000074618"/>
<dbReference type="HOGENOM" id="CLU_004962_0_5_1"/>
<dbReference type="InParanoid" id="P67777"/>
<dbReference type="OMA" id="CMKVRYP"/>
<dbReference type="OrthoDB" id="1930084at2759"/>
<dbReference type="TreeFam" id="TF105559"/>
<dbReference type="PRO" id="PR:P67777"/>
<dbReference type="Proteomes" id="UP000001811">
    <property type="component" value="Chromosome 3"/>
</dbReference>
<dbReference type="Bgee" id="ENSOCUG00000015961">
    <property type="expression patterns" value="Expressed in prefrontal cortex and 15 other cell types or tissues"/>
</dbReference>
<dbReference type="GO" id="GO:0000785">
    <property type="term" value="C:chromatin"/>
    <property type="evidence" value="ECO:0000250"/>
    <property type="project" value="UniProtKB"/>
</dbReference>
<dbReference type="GO" id="GO:0000775">
    <property type="term" value="C:chromosome, centromeric region"/>
    <property type="evidence" value="ECO:0007669"/>
    <property type="project" value="UniProtKB-SubCell"/>
</dbReference>
<dbReference type="GO" id="GO:0005737">
    <property type="term" value="C:cytoplasm"/>
    <property type="evidence" value="ECO:0007669"/>
    <property type="project" value="UniProtKB-SubCell"/>
</dbReference>
<dbReference type="GO" id="GO:0160232">
    <property type="term" value="C:INTAC complex"/>
    <property type="evidence" value="ECO:0000250"/>
    <property type="project" value="UniProtKB"/>
</dbReference>
<dbReference type="GO" id="GO:0045121">
    <property type="term" value="C:membrane raft"/>
    <property type="evidence" value="ECO:0000250"/>
    <property type="project" value="UniProtKB"/>
</dbReference>
<dbReference type="GO" id="GO:0005634">
    <property type="term" value="C:nucleus"/>
    <property type="evidence" value="ECO:0000250"/>
    <property type="project" value="UniProtKB"/>
</dbReference>
<dbReference type="GO" id="GO:0000922">
    <property type="term" value="C:spindle pole"/>
    <property type="evidence" value="ECO:0007669"/>
    <property type="project" value="UniProtKB-SubCell"/>
</dbReference>
<dbReference type="GO" id="GO:0046872">
    <property type="term" value="F:metal ion binding"/>
    <property type="evidence" value="ECO:0007669"/>
    <property type="project" value="UniProtKB-KW"/>
</dbReference>
<dbReference type="GO" id="GO:0046982">
    <property type="term" value="F:protein heterodimerization activity"/>
    <property type="evidence" value="ECO:0000250"/>
    <property type="project" value="UniProtKB"/>
</dbReference>
<dbReference type="GO" id="GO:0019888">
    <property type="term" value="F:protein phosphatase regulator activity"/>
    <property type="evidence" value="ECO:0000250"/>
    <property type="project" value="UniProtKB"/>
</dbReference>
<dbReference type="GO" id="GO:0004722">
    <property type="term" value="F:protein serine/threonine phosphatase activity"/>
    <property type="evidence" value="ECO:0000250"/>
    <property type="project" value="UniProtKB"/>
</dbReference>
<dbReference type="GO" id="GO:0180006">
    <property type="term" value="F:RNA polymerase II CTD heptapeptide repeat S2 phosphatase activity"/>
    <property type="evidence" value="ECO:0000250"/>
    <property type="project" value="UniProtKB"/>
</dbReference>
<dbReference type="GO" id="GO:0180007">
    <property type="term" value="F:RNA polymerase II CTD heptapeptide repeat S5 phosphatase activity"/>
    <property type="evidence" value="ECO:0000250"/>
    <property type="project" value="UniProtKB"/>
</dbReference>
<dbReference type="GO" id="GO:0180008">
    <property type="term" value="F:RNA polymerase II CTD heptapeptide repeat S7 phosphatase activity"/>
    <property type="evidence" value="ECO:0000250"/>
    <property type="project" value="UniProtKB"/>
</dbReference>
<dbReference type="GO" id="GO:0051321">
    <property type="term" value="P:meiotic cell cycle"/>
    <property type="evidence" value="ECO:0007669"/>
    <property type="project" value="UniProtKB-KW"/>
</dbReference>
<dbReference type="GO" id="GO:0035331">
    <property type="term" value="P:negative regulation of hippo signaling"/>
    <property type="evidence" value="ECO:0000250"/>
    <property type="project" value="UniProtKB"/>
</dbReference>
<dbReference type="GO" id="GO:0051898">
    <property type="term" value="P:negative regulation of phosphatidylinositol 3-kinase/protein kinase B signal transduction"/>
    <property type="evidence" value="ECO:0000250"/>
    <property type="project" value="UniProtKB"/>
</dbReference>
<dbReference type="GO" id="GO:1900227">
    <property type="term" value="P:positive regulation of NLRP3 inflammasome complex assembly"/>
    <property type="evidence" value="ECO:0000250"/>
    <property type="project" value="UniProtKB"/>
</dbReference>
<dbReference type="GO" id="GO:0006470">
    <property type="term" value="P:protein dephosphorylation"/>
    <property type="evidence" value="ECO:0000250"/>
    <property type="project" value="UniProtKB"/>
</dbReference>
<dbReference type="GO" id="GO:0160240">
    <property type="term" value="P:RNA polymerase II transcription initiation surveillance"/>
    <property type="evidence" value="ECO:0000250"/>
    <property type="project" value="UniProtKB"/>
</dbReference>
<dbReference type="GO" id="GO:0043029">
    <property type="term" value="P:T cell homeostasis"/>
    <property type="evidence" value="ECO:0000250"/>
    <property type="project" value="UniProtKB"/>
</dbReference>
<dbReference type="CDD" id="cd07415">
    <property type="entry name" value="MPP_PP2A_PP4_PP6"/>
    <property type="match status" value="1"/>
</dbReference>
<dbReference type="FunFam" id="3.60.21.10:FF:000003">
    <property type="entry name" value="Serine/threonine-protein phosphatase"/>
    <property type="match status" value="1"/>
</dbReference>
<dbReference type="Gene3D" id="3.60.21.10">
    <property type="match status" value="1"/>
</dbReference>
<dbReference type="InterPro" id="IPR004843">
    <property type="entry name" value="Calcineurin-like_PHP_ApaH"/>
</dbReference>
<dbReference type="InterPro" id="IPR029052">
    <property type="entry name" value="Metallo-depent_PP-like"/>
</dbReference>
<dbReference type="InterPro" id="IPR047129">
    <property type="entry name" value="PPA2-like"/>
</dbReference>
<dbReference type="InterPro" id="IPR006186">
    <property type="entry name" value="Ser/Thr-sp_prot-phosphatase"/>
</dbReference>
<dbReference type="PANTHER" id="PTHR45619">
    <property type="entry name" value="SERINE/THREONINE-PROTEIN PHOSPHATASE PP2A-RELATED"/>
    <property type="match status" value="1"/>
</dbReference>
<dbReference type="Pfam" id="PF00149">
    <property type="entry name" value="Metallophos"/>
    <property type="match status" value="1"/>
</dbReference>
<dbReference type="PRINTS" id="PR00114">
    <property type="entry name" value="STPHPHTASE"/>
</dbReference>
<dbReference type="SMART" id="SM00156">
    <property type="entry name" value="PP2Ac"/>
    <property type="match status" value="1"/>
</dbReference>
<dbReference type="SUPFAM" id="SSF56300">
    <property type="entry name" value="Metallo-dependent phosphatases"/>
    <property type="match status" value="1"/>
</dbReference>
<dbReference type="PROSITE" id="PS00125">
    <property type="entry name" value="SER_THR_PHOSPHATASE"/>
    <property type="match status" value="1"/>
</dbReference>
<comment type="function">
    <text evidence="2 4">Catalytic subunit of protein phosphatase 2A (PP2A), a serine/threonine phosphatase involved in the regulation of a wide variety of enzymes, signal transduction pathways, and cellular events. PP2A is the major phosphatase for microtubule-associated proteins (MAPs). PP2A can modulate the activity of phosphorylase B kinase casein kinase 2, mitogen-stimulated S6 kinase, and MAP-2 kinase (By similarity). Cooperates with SGO2 to protect centromeric cohesin from separase-mediated cleavage in oocytes specifically during meiosis I (By similarity). Can dephosphorylate various proteins, such as AXIN1, p53/TP53, PIM3, WEE1. Activates RAF1 by dephosphorylating it at 'Ser-259'. Mediates dephosphorylation of WEE1, preventing its ubiquitin-mediated proteolysis, increasing WEE1 protein levels, and promoting the G2/M checkpoint. Mediates dephosphorylation of MYC; promoting its ubiquitin-mediated proteolysis: interaction with AMBRA1 enhances interaction between PPP2CA and MYC. Mediates dephosphorylation of FOXO3; promoting its stabilization: interaction with AMBRA1 enhances interaction between PPP2CA and FOXO3 (By similarity). Catalyzes dephosphorylation of the pyrin domain of NLRP3, promoting assembly of the NLRP3 inflammasome. Together with RACK1 adapter, mediates dephosphorylation of AKT1 at 'Ser-473', preventing AKT1 activation and AKT-mTOR signaling pathway. Dephosphorylation of AKT1 is essential for regulatory T-cells (Treg) homeostasis and stability (By similarity). Catalyzes dephosphorylation of PIM3, promotinh PIM3 ubiquitination and proteasomal degradation. Part of the striatin-interacting phosphatase and kinase (STRIPAK) complexes. STRIPAK complexes have critical roles in protein (de)phosphorylation and are regulators of multiple signaling pathways including Hippo, MAPK, nuclear receptor and cytoskeleton remodeling. Different types of STRIPAK complexes are involved in a variety of biological processes such as cell growth, differentiation, apoptosis, metabolism and immune regulation. Key mediator of a quality checkpoint during transcription elongation as part of the Integrator-PP2A (INTAC) complex. The INTAC complex drives premature transcription termination of transcripts that are unfavorably configured for transcriptional elongation: within the INTAC complex, PPP2CA catalyzes dephosphorylation of the C-terminal domain (CTD) of Pol II subunit POLR2A/RPB1 and SUPT5H/SPT5, thereby preventing transcriptional elongation (By similarity).</text>
</comment>
<comment type="catalytic activity">
    <reaction evidence="4">
        <text>O-phospho-L-seryl-[protein] + H2O = L-seryl-[protein] + phosphate</text>
        <dbReference type="Rhea" id="RHEA:20629"/>
        <dbReference type="Rhea" id="RHEA-COMP:9863"/>
        <dbReference type="Rhea" id="RHEA-COMP:11604"/>
        <dbReference type="ChEBI" id="CHEBI:15377"/>
        <dbReference type="ChEBI" id="CHEBI:29999"/>
        <dbReference type="ChEBI" id="CHEBI:43474"/>
        <dbReference type="ChEBI" id="CHEBI:83421"/>
        <dbReference type="EC" id="3.1.3.16"/>
    </reaction>
</comment>
<comment type="catalytic activity">
    <reaction evidence="4">
        <text>O-phospho-L-threonyl-[protein] + H2O = L-threonyl-[protein] + phosphate</text>
        <dbReference type="Rhea" id="RHEA:47004"/>
        <dbReference type="Rhea" id="RHEA-COMP:11060"/>
        <dbReference type="Rhea" id="RHEA-COMP:11605"/>
        <dbReference type="ChEBI" id="CHEBI:15377"/>
        <dbReference type="ChEBI" id="CHEBI:30013"/>
        <dbReference type="ChEBI" id="CHEBI:43474"/>
        <dbReference type="ChEBI" id="CHEBI:61977"/>
        <dbReference type="EC" id="3.1.3.16"/>
    </reaction>
</comment>
<comment type="cofactor">
    <cofactor evidence="4">
        <name>Mn(2+)</name>
        <dbReference type="ChEBI" id="CHEBI:29035"/>
    </cofactor>
    <cofactor evidence="4">
        <name>Fe(3+)</name>
        <dbReference type="ChEBI" id="CHEBI:29034"/>
    </cofactor>
    <cofactor evidence="4">
        <name>Zn(2+)</name>
        <dbReference type="ChEBI" id="CHEBI:29105"/>
    </cofactor>
    <text evidence="4">Binds 2 metal ions per subunit. Can be two manganese ions, or one iron ion and one zinc ion.</text>
</comment>
<comment type="activity regulation">
    <text evidence="4">Inhibited by the interaction between PPP2R2A and ARPP19; this inhibition is enhanced when ARPP19 is phosphorylated (By similarity). Inhibited by the interaction between PPP2R2A and PABIR1/FAM122A (By similarity).</text>
</comment>
<comment type="subunit">
    <text evidence="2 4">PP2A consists of a common heterodimeric core enzyme composed of PPP2CA, a 36 kDa catalytic subunit (subunit C), and PPP2R1A, a 65 kDa constant regulatory subunit (PR65 or subunit A), that associates with a variety of regulatory subunits. Proteins that associate with the core dimer include three families of regulatory subunits B (the R2/B/PR55/B55, R3/B''/PR72/PR130/PR59 and R5/B'/B56 families), the 48 kDa variable regulatory subunit, viral proteins, and cell signaling molecules. Interacts with the PP2A A subunit PPP2R1A. Interacts with the regulatory subunit PPP2R2A. Interacts (via C-terminus) with PTPA (By similarity). Interacts with NXN; the interaction is direct (By similarity). Interacts with KCTD20 (By similarity). Interacts with BTBD10 (By similarity). Interacts with SGO1 and SGO2. Interacts with RAF1. Interaction with IGBP1 protects unassembled PPP2CA from degradative ubiquitination. Interacts with GSK3B (via C2 domain). Interacts with MFHAS1; retains PPP2CA into the cytoplasm and excludes it from the nucleus. Interacts with PABIR1/FAM122A. Interacts with ADCY8; interaction is phosphatase activity-dependent; antagonizes interaction between ADCY8 and calmodulin. Interacts with CRTC3 (when phosphorylated at 'Ser-391'). Interacts with SPRY2; the interaction is inhibited by TESK1 interaction with SPRY2, possibly by vesicular sequestration of SPRY2. Interacts with TRAF3IP3. Interacts with AMBRA1 (via PxP motifs); enhancing interaction between PPP2CA and MYC or FOXO3. Forms a complex with AMBRA1 and BECN1; AMBRA1 and BECN1 components of the complex regulate MYC stability via different pathways. Part of the core of STRIPAK complexes composed of PP2A catalytic and scaffolding subunits, the striatins (PP2A regulatory subunits), the striatin-associated proteins MOB4, STRIP1 and STRIP2, PDCD10 and members of the STE20 kinases, such as STK24 and STK26. Phosphatase component of the Integrator-PP2A (INTAC) complex, composed of the Integrator core complex and protein phosphatase 2A subunits PPP2CA and PPP2R1A (By similarity).</text>
</comment>
<comment type="subcellular location">
    <subcellularLocation>
        <location evidence="4">Cytoplasm</location>
    </subcellularLocation>
    <subcellularLocation>
        <location evidence="4">Nucleus</location>
    </subcellularLocation>
    <subcellularLocation>
        <location evidence="4">Chromosome</location>
    </subcellularLocation>
    <subcellularLocation>
        <location evidence="4">Chromosome</location>
        <location evidence="4">Centromere</location>
    </subcellularLocation>
    <subcellularLocation>
        <location evidence="4">Cytoplasm</location>
        <location evidence="4">Cytoskeleton</location>
        <location evidence="4">Spindle pole</location>
    </subcellularLocation>
    <text evidence="2 4">In prometaphase cells, but not in anaphase cells, localizes at centromeres. During mitosis, also found at spindle poles (By similarity). Centromeric localization requires the presence of SGO2 (By similarity). Recruited to chromatin and transcription pause-release checkpoint via its association with the Integrator complex (By similarity).</text>
</comment>
<comment type="PTM">
    <text evidence="3">Reversibly methyl esterified on Leu-309 by leucine carboxyl methyltransferase 1 (LCMT1) and protein phosphatase methylesterase 1 (PPME1). Carboxyl methylation influences the affinity of the catalytic subunit for the different regulatory subunits, thereby modulating the PP2A holoenzyme's substrate specificity, enzyme activity and cellular localization (By similarity).</text>
</comment>
<comment type="PTM">
    <text evidence="3">Phosphorylation of either threonine (by autophosphorylation-activated protein kinase) or tyrosine results in inactivation of the phosphatase. Auto-dephosphorylation has been suggested as a mechanism for reactivation (By similarity).</text>
</comment>
<comment type="PTM">
    <text evidence="4">Polyubiquitinated, leading to its degradation by the proteasome.</text>
</comment>
<comment type="similarity">
    <text evidence="5">Belongs to the PPP phosphatase family. PP-1 subfamily.</text>
</comment>
<protein>
    <recommendedName>
        <fullName>Serine/threonine-protein phosphatase 2A catalytic subunit alpha isoform</fullName>
        <shortName>PP2A-alpha</shortName>
        <ecNumber evidence="4">3.1.3.16</ecNumber>
    </recommendedName>
</protein>
<sequence>MDEKVFTKELDQWIEQLNECKQLSESQVKSLCEKAKEILTKESNVQEVRCPVTVCGDVHGQFHDLMELFRIGGKSPDTNYLFMGDYVDRGYYSVETVTLLVALKVRYRERITILRGNHESRQITQVYGFYDECLRKYGNANVWKYFTDLFDYLPLTALVDGQIFCLHGGLSPSIDTLDHIRALDRLQEVPHEGPMCDLLWSDPDDRGGWGISPRGAGYTFGQDISETFNHANGLTLVSRAHQLVMEGYNWCHDRNVVTIFSAPNYCYRCGNQAAIMELDDTLKYSFLQFDPAPRRGEPHVTRRTPDYFL</sequence>
<feature type="chain" id="PRO_0000058842" description="Serine/threonine-protein phosphatase 2A catalytic subunit alpha isoform">
    <location>
        <begin position="1"/>
        <end position="309"/>
    </location>
</feature>
<feature type="active site" description="Proton donor" evidence="1">
    <location>
        <position position="118"/>
    </location>
</feature>
<feature type="binding site" evidence="4">
    <location>
        <position position="57"/>
    </location>
    <ligand>
        <name>Mn(2+)</name>
        <dbReference type="ChEBI" id="CHEBI:29035"/>
        <label>1</label>
    </ligand>
</feature>
<feature type="binding site" evidence="4">
    <location>
        <position position="57"/>
    </location>
    <ligand>
        <name>Zn(2+)</name>
        <dbReference type="ChEBI" id="CHEBI:29105"/>
    </ligand>
</feature>
<feature type="binding site" evidence="4">
    <location>
        <position position="59"/>
    </location>
    <ligand>
        <name>Mn(2+)</name>
        <dbReference type="ChEBI" id="CHEBI:29035"/>
        <label>1</label>
    </ligand>
</feature>
<feature type="binding site" evidence="4">
    <location>
        <position position="59"/>
    </location>
    <ligand>
        <name>Zn(2+)</name>
        <dbReference type="ChEBI" id="CHEBI:29105"/>
    </ligand>
</feature>
<feature type="binding site" evidence="4">
    <location>
        <position position="85"/>
    </location>
    <ligand>
        <name>Fe(3+)</name>
        <dbReference type="ChEBI" id="CHEBI:29034"/>
    </ligand>
</feature>
<feature type="binding site" evidence="4">
    <location>
        <position position="85"/>
    </location>
    <ligand>
        <name>Mn(2+)</name>
        <dbReference type="ChEBI" id="CHEBI:29035"/>
        <label>1</label>
    </ligand>
</feature>
<feature type="binding site" evidence="4">
    <location>
        <position position="85"/>
    </location>
    <ligand>
        <name>Mn(2+)</name>
        <dbReference type="ChEBI" id="CHEBI:29035"/>
        <label>2</label>
    </ligand>
</feature>
<feature type="binding site" evidence="4">
    <location>
        <position position="85"/>
    </location>
    <ligand>
        <name>Zn(2+)</name>
        <dbReference type="ChEBI" id="CHEBI:29105"/>
    </ligand>
</feature>
<feature type="binding site" evidence="4">
    <location>
        <position position="117"/>
    </location>
    <ligand>
        <name>Fe(3+)</name>
        <dbReference type="ChEBI" id="CHEBI:29034"/>
    </ligand>
</feature>
<feature type="binding site" evidence="4">
    <location>
        <position position="117"/>
    </location>
    <ligand>
        <name>Mn(2+)</name>
        <dbReference type="ChEBI" id="CHEBI:29035"/>
        <label>2</label>
    </ligand>
</feature>
<feature type="binding site" evidence="4">
    <location>
        <position position="167"/>
    </location>
    <ligand>
        <name>Fe(3+)</name>
        <dbReference type="ChEBI" id="CHEBI:29034"/>
    </ligand>
</feature>
<feature type="binding site" evidence="4">
    <location>
        <position position="167"/>
    </location>
    <ligand>
        <name>Mn(2+)</name>
        <dbReference type="ChEBI" id="CHEBI:29035"/>
        <label>2</label>
    </ligand>
</feature>
<feature type="binding site" evidence="4">
    <location>
        <position position="241"/>
    </location>
    <ligand>
        <name>Fe(3+)</name>
        <dbReference type="ChEBI" id="CHEBI:29034"/>
    </ligand>
</feature>
<feature type="binding site" evidence="4">
    <location>
        <position position="241"/>
    </location>
    <ligand>
        <name>Mn(2+)</name>
        <dbReference type="ChEBI" id="CHEBI:29035"/>
        <label>2</label>
    </ligand>
</feature>
<feature type="modified residue" description="Phosphotyrosine" evidence="3">
    <location>
        <position position="307"/>
    </location>
</feature>
<feature type="modified residue" description="Leucine methyl ester" evidence="3">
    <location>
        <position position="309"/>
    </location>
</feature>